<protein>
    <recommendedName>
        <fullName>Sodium/bile acid cotransporter 7-A</fullName>
    </recommendedName>
    <alternativeName>
        <fullName>Na(+)/bile acid cotransporter 7-A</fullName>
    </alternativeName>
    <alternativeName>
        <fullName>Solute carrier family 10 member 7-A</fullName>
    </alternativeName>
</protein>
<dbReference type="EMBL" id="DQ122862">
    <property type="protein sequence ID" value="AAZ32258.1"/>
    <property type="molecule type" value="mRNA"/>
</dbReference>
<dbReference type="EMBL" id="BC056022">
    <property type="protein sequence ID" value="AAH56022.1"/>
    <property type="molecule type" value="mRNA"/>
</dbReference>
<dbReference type="RefSeq" id="NP_001080729.1">
    <property type="nucleotide sequence ID" value="NM_001087260.1"/>
</dbReference>
<dbReference type="SMR" id="Q7T0V6"/>
<dbReference type="DNASU" id="380421"/>
<dbReference type="GeneID" id="380421"/>
<dbReference type="KEGG" id="xla:380421"/>
<dbReference type="AGR" id="Xenbase:XB-GENE-865863"/>
<dbReference type="CTD" id="380421"/>
<dbReference type="Xenbase" id="XB-GENE-865863">
    <property type="gene designation" value="slc10a7.S"/>
</dbReference>
<dbReference type="OMA" id="RYVFKQL"/>
<dbReference type="OrthoDB" id="188035at2759"/>
<dbReference type="Proteomes" id="UP000186698">
    <property type="component" value="Chromosome 1S"/>
</dbReference>
<dbReference type="Bgee" id="380421">
    <property type="expression patterns" value="Expressed in pancreas and 20 other cell types or tissues"/>
</dbReference>
<dbReference type="GO" id="GO:0005789">
    <property type="term" value="C:endoplasmic reticulum membrane"/>
    <property type="evidence" value="ECO:0007669"/>
    <property type="project" value="UniProtKB-SubCell"/>
</dbReference>
<dbReference type="GO" id="GO:0000139">
    <property type="term" value="C:Golgi membrane"/>
    <property type="evidence" value="ECO:0007669"/>
    <property type="project" value="UniProtKB-SubCell"/>
</dbReference>
<dbReference type="GO" id="GO:0005886">
    <property type="term" value="C:plasma membrane"/>
    <property type="evidence" value="ECO:0000318"/>
    <property type="project" value="GO_Central"/>
</dbReference>
<dbReference type="GO" id="GO:0015293">
    <property type="term" value="F:symporter activity"/>
    <property type="evidence" value="ECO:0007669"/>
    <property type="project" value="UniProtKB-KW"/>
</dbReference>
<dbReference type="GO" id="GO:0006814">
    <property type="term" value="P:sodium ion transport"/>
    <property type="evidence" value="ECO:0007669"/>
    <property type="project" value="UniProtKB-KW"/>
</dbReference>
<dbReference type="FunFam" id="1.20.1530.20:FF:000008">
    <property type="entry name" value="Sodium/bile acid cotransporter"/>
    <property type="match status" value="1"/>
</dbReference>
<dbReference type="Gene3D" id="1.20.1530.20">
    <property type="match status" value="1"/>
</dbReference>
<dbReference type="InterPro" id="IPR038770">
    <property type="entry name" value="Na+/solute_symporter_sf"/>
</dbReference>
<dbReference type="InterPro" id="IPR016833">
    <property type="entry name" value="Put_Na-Bile_cotransptr"/>
</dbReference>
<dbReference type="PANTHER" id="PTHR18640:SF5">
    <property type="entry name" value="SODIUM_BILE ACID COTRANSPORTER 7"/>
    <property type="match status" value="1"/>
</dbReference>
<dbReference type="PANTHER" id="PTHR18640">
    <property type="entry name" value="SOLUTE CARRIER FAMILY 10 MEMBER 7"/>
    <property type="match status" value="1"/>
</dbReference>
<dbReference type="Pfam" id="PF13593">
    <property type="entry name" value="SBF_like"/>
    <property type="match status" value="1"/>
</dbReference>
<dbReference type="PIRSF" id="PIRSF026166">
    <property type="entry name" value="UCP026166"/>
    <property type="match status" value="1"/>
</dbReference>
<organism>
    <name type="scientific">Xenopus laevis</name>
    <name type="common">African clawed frog</name>
    <dbReference type="NCBI Taxonomy" id="8355"/>
    <lineage>
        <taxon>Eukaryota</taxon>
        <taxon>Metazoa</taxon>
        <taxon>Chordata</taxon>
        <taxon>Craniata</taxon>
        <taxon>Vertebrata</taxon>
        <taxon>Euteleostomi</taxon>
        <taxon>Amphibia</taxon>
        <taxon>Batrachia</taxon>
        <taxon>Anura</taxon>
        <taxon>Pipoidea</taxon>
        <taxon>Pipidae</taxon>
        <taxon>Xenopodinae</taxon>
        <taxon>Xenopus</taxon>
        <taxon>Xenopus</taxon>
    </lineage>
</organism>
<proteinExistence type="evidence at transcript level"/>
<name>NTP7A_XENLA</name>
<feature type="chain" id="PRO_0000278255" description="Sodium/bile acid cotransporter 7-A">
    <location>
        <begin position="1"/>
        <end position="343"/>
    </location>
</feature>
<feature type="topological domain" description="Cytoplasmic" evidence="1">
    <location>
        <begin position="1"/>
        <end position="10"/>
    </location>
</feature>
<feature type="transmembrane region" description="Helical" evidence="2">
    <location>
        <begin position="11"/>
        <end position="31"/>
    </location>
</feature>
<feature type="topological domain" description="Extracellular" evidence="1">
    <location>
        <begin position="32"/>
        <end position="37"/>
    </location>
</feature>
<feature type="transmembrane region" description="Helical" evidence="2">
    <location>
        <begin position="38"/>
        <end position="58"/>
    </location>
</feature>
<feature type="topological domain" description="Cytoplasmic" evidence="1">
    <location>
        <begin position="59"/>
        <end position="71"/>
    </location>
</feature>
<feature type="transmembrane region" description="Helical" evidence="2">
    <location>
        <begin position="72"/>
        <end position="92"/>
    </location>
</feature>
<feature type="topological domain" description="Extracellular" evidence="1">
    <location>
        <begin position="93"/>
        <end position="116"/>
    </location>
</feature>
<feature type="transmembrane region" description="Helical" evidence="2">
    <location>
        <begin position="117"/>
        <end position="137"/>
    </location>
</feature>
<feature type="topological domain" description="Cytoplasmic" evidence="1">
    <location>
        <position position="138"/>
    </location>
</feature>
<feature type="transmembrane region" description="Helical" evidence="2">
    <location>
        <begin position="139"/>
        <end position="159"/>
    </location>
</feature>
<feature type="topological domain" description="Extracellular" evidence="1">
    <location>
        <begin position="160"/>
        <end position="163"/>
    </location>
</feature>
<feature type="transmembrane region" description="Helical" evidence="2">
    <location>
        <begin position="164"/>
        <end position="184"/>
    </location>
</feature>
<feature type="topological domain" description="Cytoplasmic" evidence="1">
    <location>
        <begin position="185"/>
        <end position="201"/>
    </location>
</feature>
<feature type="transmembrane region" description="Helical" evidence="2">
    <location>
        <begin position="202"/>
        <end position="222"/>
    </location>
</feature>
<feature type="topological domain" description="Extracellular" evidence="1">
    <location>
        <begin position="223"/>
        <end position="234"/>
    </location>
</feature>
<feature type="transmembrane region" description="Helical" evidence="2">
    <location>
        <begin position="235"/>
        <end position="255"/>
    </location>
</feature>
<feature type="topological domain" description="Cytoplasmic" evidence="1">
    <location>
        <begin position="256"/>
        <end position="270"/>
    </location>
</feature>
<feature type="transmembrane region" description="Helical" evidence="2">
    <location>
        <begin position="271"/>
        <end position="291"/>
    </location>
</feature>
<feature type="topological domain" description="Extracellular" evidence="1">
    <location>
        <begin position="292"/>
        <end position="298"/>
    </location>
</feature>
<feature type="transmembrane region" description="Helical" evidence="2">
    <location>
        <begin position="299"/>
        <end position="319"/>
    </location>
</feature>
<feature type="topological domain" description="Cytoplasmic" evidence="1">
    <location>
        <begin position="320"/>
        <end position="343"/>
    </location>
</feature>
<reference key="1">
    <citation type="journal article" date="2007" name="Eur. J. Cell Biol.">
        <title>Molecular and phylogenetic characterization of a novel putative membrane transporter (SLC10A7), conserved in vertebrates and bacteria.</title>
        <authorList>
            <person name="Godoy J.R."/>
            <person name="Fernandes C."/>
            <person name="Doering B."/>
            <person name="Beuerlein K."/>
            <person name="Petzinger E."/>
            <person name="Geyer J."/>
        </authorList>
    </citation>
    <scope>NUCLEOTIDE SEQUENCE [MRNA]</scope>
    <scope>TISSUE SPECIFICITY</scope>
    <source>
        <tissue>Small intestine</tissue>
    </source>
</reference>
<reference key="2">
    <citation type="submission" date="2003-08" db="EMBL/GenBank/DDBJ databases">
        <authorList>
            <consortium name="NIH - Xenopus Gene Collection (XGC) project"/>
        </authorList>
    </citation>
    <scope>NUCLEOTIDE SEQUENCE [LARGE SCALE MRNA]</scope>
    <source>
        <tissue>Embryo</tissue>
    </source>
</reference>
<accession>Q7T0V6</accession>
<keyword id="KW-1003">Cell membrane</keyword>
<keyword id="KW-0256">Endoplasmic reticulum</keyword>
<keyword id="KW-0333">Golgi apparatus</keyword>
<keyword id="KW-0406">Ion transport</keyword>
<keyword id="KW-0472">Membrane</keyword>
<keyword id="KW-1185">Reference proteome</keyword>
<keyword id="KW-0915">Sodium</keyword>
<keyword id="KW-0739">Sodium transport</keyword>
<keyword id="KW-0769">Symport</keyword>
<keyword id="KW-0812">Transmembrane</keyword>
<keyword id="KW-1133">Transmembrane helix</keyword>
<keyword id="KW-0813">Transport</keyword>
<comment type="function">
    <text evidence="1">Involved in teeth and skeletal development. Has an essential role in the biosynthesis and trafficking of glycosaminoglycans and glycoproteins to produce a proper functioning extracellular matrix. Required for extracellular matrix mineralization. Also involved in the regulation of cellular calcium homeostasis. Does not show transport activity towards bile acids or steroid sulfates.</text>
</comment>
<comment type="subcellular location">
    <subcellularLocation>
        <location evidence="1">Cell membrane</location>
        <topology evidence="1">Multi-pass membrane protein</topology>
    </subcellularLocation>
    <subcellularLocation>
        <location evidence="1">Endoplasmic reticulum membrane</location>
        <topology evidence="1">Multi-pass membrane protein</topology>
    </subcellularLocation>
    <subcellularLocation>
        <location evidence="1">Golgi apparatus membrane</location>
    </subcellularLocation>
</comment>
<comment type="tissue specificity">
    <text evidence="3">Strongly expressed in small intestine. Moderately expressed in spleen. Weakly expressed in skeletal muscle. Not detected in other tissues tested.</text>
</comment>
<comment type="similarity">
    <text evidence="4">Belongs to the bile acid:sodium symporter (BASS) (TC 2.A.28) family.</text>
</comment>
<gene>
    <name type="primary">slc10a7-a</name>
</gene>
<evidence type="ECO:0000250" key="1">
    <source>
        <dbReference type="UniProtKB" id="Q0GE19"/>
    </source>
</evidence>
<evidence type="ECO:0000255" key="2"/>
<evidence type="ECO:0000269" key="3">
    <source>
    </source>
</evidence>
<evidence type="ECO:0000305" key="4"/>
<sequence length="343" mass="37868">MGLLERLRKEWFIVGIILVIAAAKLEPTVGVKGGPLKPEITITYIAVSAIFFNSGLSLKTEELTNALMHVKLHLFVQLFTLVFFPTAIWLFLQVLSLTPINEWLLKGLQTVSCMPPPVSSAVILTKAVGGNEAAAIFNSAFGSFLGIVVTPLLLLLFLGSSSSVPFTSIFSQLFMTVVVPLIIGQIVRRYIKDWLERKKPPFGAISSCVLLMIIYTTFCDTFSNPNIDLDTFSLVVIVFIIFFIQLAFMLLTFLFSTSKNSGFTPADTVAIVFCSTHKSLTLGIPMLKIVFVGYEHLSLISVPLLIYHPAQILLGSVLVPTIKSWMLSRQKALKLTRQPKIPL</sequence>